<keyword id="KW-0963">Cytoplasm</keyword>
<keyword id="KW-0378">Hydrolase</keyword>
<keyword id="KW-1185">Reference proteome</keyword>
<keyword id="KW-0694">RNA-binding</keyword>
<keyword id="KW-0820">tRNA-binding</keyword>
<name>PTH_RUEPO</name>
<evidence type="ECO:0000255" key="1">
    <source>
        <dbReference type="HAMAP-Rule" id="MF_00083"/>
    </source>
</evidence>
<evidence type="ECO:0000256" key="2">
    <source>
        <dbReference type="SAM" id="MobiDB-lite"/>
    </source>
</evidence>
<protein>
    <recommendedName>
        <fullName evidence="1">Peptidyl-tRNA hydrolase</fullName>
        <shortName evidence="1">Pth</shortName>
        <ecNumber evidence="1">3.1.1.29</ecNumber>
    </recommendedName>
</protein>
<reference key="1">
    <citation type="journal article" date="2004" name="Nature">
        <title>Genome sequence of Silicibacter pomeroyi reveals adaptations to the marine environment.</title>
        <authorList>
            <person name="Moran M.A."/>
            <person name="Buchan A."/>
            <person name="Gonzalez J.M."/>
            <person name="Heidelberg J.F."/>
            <person name="Whitman W.B."/>
            <person name="Kiene R.P."/>
            <person name="Henriksen J.R."/>
            <person name="King G.M."/>
            <person name="Belas R."/>
            <person name="Fuqua C."/>
            <person name="Brinkac L.M."/>
            <person name="Lewis M."/>
            <person name="Johri S."/>
            <person name="Weaver B."/>
            <person name="Pai G."/>
            <person name="Eisen J.A."/>
            <person name="Rahe E."/>
            <person name="Sheldon W.M."/>
            <person name="Ye W."/>
            <person name="Miller T.R."/>
            <person name="Carlton J."/>
            <person name="Rasko D.A."/>
            <person name="Paulsen I.T."/>
            <person name="Ren Q."/>
            <person name="Daugherty S.C."/>
            <person name="DeBoy R.T."/>
            <person name="Dodson R.J."/>
            <person name="Durkin A.S."/>
            <person name="Madupu R."/>
            <person name="Nelson W.C."/>
            <person name="Sullivan S.A."/>
            <person name="Rosovitz M.J."/>
            <person name="Haft D.H."/>
            <person name="Selengut J."/>
            <person name="Ward N."/>
        </authorList>
    </citation>
    <scope>NUCLEOTIDE SEQUENCE [LARGE SCALE GENOMIC DNA]</scope>
    <source>
        <strain>ATCC 700808 / DSM 15171 / DSS-3</strain>
    </source>
</reference>
<reference key="2">
    <citation type="journal article" date="2014" name="Stand. Genomic Sci.">
        <title>An updated genome annotation for the model marine bacterium Ruegeria pomeroyi DSS-3.</title>
        <authorList>
            <person name="Rivers A.R."/>
            <person name="Smith C.B."/>
            <person name="Moran M.A."/>
        </authorList>
    </citation>
    <scope>GENOME REANNOTATION</scope>
    <source>
        <strain>ATCC 700808 / DSM 15171 / DSS-3</strain>
    </source>
</reference>
<organism>
    <name type="scientific">Ruegeria pomeroyi (strain ATCC 700808 / DSM 15171 / DSS-3)</name>
    <name type="common">Silicibacter pomeroyi</name>
    <dbReference type="NCBI Taxonomy" id="246200"/>
    <lineage>
        <taxon>Bacteria</taxon>
        <taxon>Pseudomonadati</taxon>
        <taxon>Pseudomonadota</taxon>
        <taxon>Alphaproteobacteria</taxon>
        <taxon>Rhodobacterales</taxon>
        <taxon>Roseobacteraceae</taxon>
        <taxon>Ruegeria</taxon>
    </lineage>
</organism>
<accession>Q5LV91</accession>
<feature type="chain" id="PRO_0000187813" description="Peptidyl-tRNA hydrolase">
    <location>
        <begin position="1"/>
        <end position="239"/>
    </location>
</feature>
<feature type="region of interest" description="Disordered" evidence="2">
    <location>
        <begin position="186"/>
        <end position="239"/>
    </location>
</feature>
<feature type="compositionally biased region" description="Low complexity" evidence="2">
    <location>
        <begin position="193"/>
        <end position="204"/>
    </location>
</feature>
<feature type="compositionally biased region" description="Pro residues" evidence="2">
    <location>
        <begin position="210"/>
        <end position="222"/>
    </location>
</feature>
<feature type="active site" description="Proton acceptor" evidence="1">
    <location>
        <position position="19"/>
    </location>
</feature>
<feature type="binding site" evidence="1">
    <location>
        <position position="14"/>
    </location>
    <ligand>
        <name>tRNA</name>
        <dbReference type="ChEBI" id="CHEBI:17843"/>
    </ligand>
</feature>
<feature type="binding site" evidence="1">
    <location>
        <position position="64"/>
    </location>
    <ligand>
        <name>tRNA</name>
        <dbReference type="ChEBI" id="CHEBI:17843"/>
    </ligand>
</feature>
<feature type="binding site" evidence="1">
    <location>
        <position position="66"/>
    </location>
    <ligand>
        <name>tRNA</name>
        <dbReference type="ChEBI" id="CHEBI:17843"/>
    </ligand>
</feature>
<feature type="binding site" evidence="1">
    <location>
        <position position="112"/>
    </location>
    <ligand>
        <name>tRNA</name>
        <dbReference type="ChEBI" id="CHEBI:17843"/>
    </ligand>
</feature>
<feature type="site" description="Discriminates between blocked and unblocked aminoacyl-tRNA" evidence="1">
    <location>
        <position position="9"/>
    </location>
</feature>
<feature type="site" description="Stabilizes the basic form of H active site to accept a proton" evidence="1">
    <location>
        <position position="91"/>
    </location>
</feature>
<gene>
    <name evidence="1" type="primary">pth</name>
    <name type="ordered locus">SPO0811</name>
</gene>
<sequence length="239" mass="25734">MRLFVGLGNPGAKYARNRHNIGFMALDRIAEDHGFGPWRVKFQGQIAEGRLGREKVLLLKPETFMNRSGQSVGEAMRFYKLDSTDITVLHDELDLAPGKVKVKAGGGHAGHNGLRSIHDHIGAAYDRVRLGIGHPGRKEAVAGYVLHDFARADEDWLEDVLRGVSEGAPHLAAGDGARFMNSVALRTAPPRPSTGTGRPPAKTPARAEEPPAPAASPAPATAPLPDARSPLQKLVDRFK</sequence>
<dbReference type="EC" id="3.1.1.29" evidence="1"/>
<dbReference type="EMBL" id="CP000031">
    <property type="protein sequence ID" value="AAV94116.1"/>
    <property type="molecule type" value="Genomic_DNA"/>
</dbReference>
<dbReference type="RefSeq" id="WP_011046560.1">
    <property type="nucleotide sequence ID" value="NC_003911.12"/>
</dbReference>
<dbReference type="SMR" id="Q5LV91"/>
<dbReference type="STRING" id="246200.SPO0811"/>
<dbReference type="PaxDb" id="246200-SPO0811"/>
<dbReference type="KEGG" id="sil:SPO0811"/>
<dbReference type="eggNOG" id="COG0193">
    <property type="taxonomic scope" value="Bacteria"/>
</dbReference>
<dbReference type="HOGENOM" id="CLU_062456_1_0_5"/>
<dbReference type="OrthoDB" id="9800507at2"/>
<dbReference type="Proteomes" id="UP000001023">
    <property type="component" value="Chromosome"/>
</dbReference>
<dbReference type="GO" id="GO:0005737">
    <property type="term" value="C:cytoplasm"/>
    <property type="evidence" value="ECO:0007669"/>
    <property type="project" value="UniProtKB-SubCell"/>
</dbReference>
<dbReference type="GO" id="GO:0004045">
    <property type="term" value="F:peptidyl-tRNA hydrolase activity"/>
    <property type="evidence" value="ECO:0007669"/>
    <property type="project" value="UniProtKB-UniRule"/>
</dbReference>
<dbReference type="GO" id="GO:0000049">
    <property type="term" value="F:tRNA binding"/>
    <property type="evidence" value="ECO:0007669"/>
    <property type="project" value="UniProtKB-UniRule"/>
</dbReference>
<dbReference type="GO" id="GO:0006515">
    <property type="term" value="P:protein quality control for misfolded or incompletely synthesized proteins"/>
    <property type="evidence" value="ECO:0007669"/>
    <property type="project" value="UniProtKB-UniRule"/>
</dbReference>
<dbReference type="GO" id="GO:0072344">
    <property type="term" value="P:rescue of stalled ribosome"/>
    <property type="evidence" value="ECO:0007669"/>
    <property type="project" value="UniProtKB-UniRule"/>
</dbReference>
<dbReference type="CDD" id="cd00462">
    <property type="entry name" value="PTH"/>
    <property type="match status" value="1"/>
</dbReference>
<dbReference type="FunFam" id="3.40.50.1470:FF:000001">
    <property type="entry name" value="Peptidyl-tRNA hydrolase"/>
    <property type="match status" value="1"/>
</dbReference>
<dbReference type="Gene3D" id="3.40.50.1470">
    <property type="entry name" value="Peptidyl-tRNA hydrolase"/>
    <property type="match status" value="1"/>
</dbReference>
<dbReference type="HAMAP" id="MF_00083">
    <property type="entry name" value="Pept_tRNA_hydro_bact"/>
    <property type="match status" value="1"/>
</dbReference>
<dbReference type="InterPro" id="IPR001328">
    <property type="entry name" value="Pept_tRNA_hydro"/>
</dbReference>
<dbReference type="InterPro" id="IPR018171">
    <property type="entry name" value="Pept_tRNA_hydro_CS"/>
</dbReference>
<dbReference type="InterPro" id="IPR036416">
    <property type="entry name" value="Pept_tRNA_hydro_sf"/>
</dbReference>
<dbReference type="NCBIfam" id="TIGR00447">
    <property type="entry name" value="pth"/>
    <property type="match status" value="1"/>
</dbReference>
<dbReference type="PANTHER" id="PTHR17224">
    <property type="entry name" value="PEPTIDYL-TRNA HYDROLASE"/>
    <property type="match status" value="1"/>
</dbReference>
<dbReference type="PANTHER" id="PTHR17224:SF1">
    <property type="entry name" value="PEPTIDYL-TRNA HYDROLASE"/>
    <property type="match status" value="1"/>
</dbReference>
<dbReference type="Pfam" id="PF01195">
    <property type="entry name" value="Pept_tRNA_hydro"/>
    <property type="match status" value="1"/>
</dbReference>
<dbReference type="SUPFAM" id="SSF53178">
    <property type="entry name" value="Peptidyl-tRNA hydrolase-like"/>
    <property type="match status" value="1"/>
</dbReference>
<dbReference type="PROSITE" id="PS01195">
    <property type="entry name" value="PEPT_TRNA_HYDROL_1"/>
    <property type="match status" value="1"/>
</dbReference>
<dbReference type="PROSITE" id="PS01196">
    <property type="entry name" value="PEPT_TRNA_HYDROL_2"/>
    <property type="match status" value="1"/>
</dbReference>
<proteinExistence type="inferred from homology"/>
<comment type="function">
    <text evidence="1">Hydrolyzes ribosome-free peptidyl-tRNAs (with 1 or more amino acids incorporated), which drop off the ribosome during protein synthesis, or as a result of ribosome stalling.</text>
</comment>
<comment type="function">
    <text evidence="1">Catalyzes the release of premature peptidyl moieties from peptidyl-tRNA molecules trapped in stalled 50S ribosomal subunits, and thus maintains levels of free tRNAs and 50S ribosomes.</text>
</comment>
<comment type="catalytic activity">
    <reaction evidence="1">
        <text>an N-acyl-L-alpha-aminoacyl-tRNA + H2O = an N-acyl-L-amino acid + a tRNA + H(+)</text>
        <dbReference type="Rhea" id="RHEA:54448"/>
        <dbReference type="Rhea" id="RHEA-COMP:10123"/>
        <dbReference type="Rhea" id="RHEA-COMP:13883"/>
        <dbReference type="ChEBI" id="CHEBI:15377"/>
        <dbReference type="ChEBI" id="CHEBI:15378"/>
        <dbReference type="ChEBI" id="CHEBI:59874"/>
        <dbReference type="ChEBI" id="CHEBI:78442"/>
        <dbReference type="ChEBI" id="CHEBI:138191"/>
        <dbReference type="EC" id="3.1.1.29"/>
    </reaction>
</comment>
<comment type="subunit">
    <text evidence="1">Monomer.</text>
</comment>
<comment type="subcellular location">
    <subcellularLocation>
        <location evidence="1">Cytoplasm</location>
    </subcellularLocation>
</comment>
<comment type="similarity">
    <text evidence="1">Belongs to the PTH family.</text>
</comment>